<keyword id="KW-0456">Lyase</keyword>
<keyword id="KW-0533">Nickel</keyword>
<keyword id="KW-1185">Reference proteome</keyword>
<reference key="1">
    <citation type="journal article" date="2016" name="Genome Announc.">
        <title>Complete genome sequence of Alkaliphilus metalliredigens strain QYMF, an alkaliphilic and metal-reducing bacterium isolated from borax-contaminated leachate ponds.</title>
        <authorList>
            <person name="Hwang C."/>
            <person name="Copeland A."/>
            <person name="Lucas S."/>
            <person name="Lapidus A."/>
            <person name="Barry K."/>
            <person name="Detter J.C."/>
            <person name="Glavina Del Rio T."/>
            <person name="Hammon N."/>
            <person name="Israni S."/>
            <person name="Dalin E."/>
            <person name="Tice H."/>
            <person name="Pitluck S."/>
            <person name="Chertkov O."/>
            <person name="Brettin T."/>
            <person name="Bruce D."/>
            <person name="Han C."/>
            <person name="Schmutz J."/>
            <person name="Larimer F."/>
            <person name="Land M.L."/>
            <person name="Hauser L."/>
            <person name="Kyrpides N."/>
            <person name="Mikhailova N."/>
            <person name="Ye Q."/>
            <person name="Zhou J."/>
            <person name="Richardson P."/>
            <person name="Fields M.W."/>
        </authorList>
    </citation>
    <scope>NUCLEOTIDE SEQUENCE [LARGE SCALE GENOMIC DNA]</scope>
    <source>
        <strain>QYMF</strain>
    </source>
</reference>
<sequence length="421" mass="46928">MSNQLYLECYSGISGDMAVSALLDLGADVDVLKKSLHSLNLEGYEINIGRRQKCGIDACYFDVVLEGEANHHHDHQEKHDHHHGGHPVHRNIKDIYEIIDNSQISDRSKILSKKIFHVVAKAEAKAHGIAIDEVHFHEVGAVDSIVDIVAAAVCLDNLEINEVMISDLYEGSGHVKCQHGVLPVPVPAVANIVMDNGLNLRITDTRGELVTPTGAAIAAAIKTKDTLPASYGIKKIGIGSGTKDLPKANILRAYIIEDNRNYPKKTVAVEDHIDSLDDGEAWVLETNIDDATGESLGFTMERLLENGANDVFFSPIYMKKNRPAYKLSVICTKENVKIMESIIFKNTTTIGIRKHKIRRTVLKREVTTIDTKYGQVRVKVCEFENETYYYPEYEDIKRICNETGLGFQRVYDEVEKTKTVG</sequence>
<protein>
    <recommendedName>
        <fullName evidence="1">Pyridinium-3,5-bisthiocarboxylic acid mononucleotide nickel insertion protein</fullName>
        <shortName evidence="1">P2TMN nickel insertion protein</shortName>
        <ecNumber evidence="1">4.99.1.12</ecNumber>
    </recommendedName>
    <alternativeName>
        <fullName evidence="1">Nickel-pincer cofactor biosynthesis protein LarC</fullName>
    </alternativeName>
</protein>
<organism>
    <name type="scientific">Alkaliphilus metalliredigens (strain QYMF)</name>
    <dbReference type="NCBI Taxonomy" id="293826"/>
    <lineage>
        <taxon>Bacteria</taxon>
        <taxon>Bacillati</taxon>
        <taxon>Bacillota</taxon>
        <taxon>Clostridia</taxon>
        <taxon>Peptostreptococcales</taxon>
        <taxon>Natronincolaceae</taxon>
        <taxon>Alkaliphilus</taxon>
    </lineage>
</organism>
<gene>
    <name evidence="1" type="primary">larC</name>
    <name type="ordered locus">Amet_0481</name>
</gene>
<proteinExistence type="inferred from homology"/>
<evidence type="ECO:0000255" key="1">
    <source>
        <dbReference type="HAMAP-Rule" id="MF_01074"/>
    </source>
</evidence>
<accession>A6TKJ0</accession>
<feature type="chain" id="PRO_1000064643" description="Pyridinium-3,5-bisthiocarboxylic acid mononucleotide nickel insertion protein">
    <location>
        <begin position="1"/>
        <end position="421"/>
    </location>
</feature>
<name>LARC_ALKMQ</name>
<dbReference type="EC" id="4.99.1.12" evidence="1"/>
<dbReference type="EMBL" id="CP000724">
    <property type="protein sequence ID" value="ABR46708.1"/>
    <property type="molecule type" value="Genomic_DNA"/>
</dbReference>
<dbReference type="RefSeq" id="WP_011971616.1">
    <property type="nucleotide sequence ID" value="NC_009633.1"/>
</dbReference>
<dbReference type="SMR" id="A6TKJ0"/>
<dbReference type="STRING" id="293826.Amet_0481"/>
<dbReference type="KEGG" id="amt:Amet_0481"/>
<dbReference type="eggNOG" id="COG1641">
    <property type="taxonomic scope" value="Bacteria"/>
</dbReference>
<dbReference type="HOGENOM" id="CLU_028523_2_1_9"/>
<dbReference type="OrthoDB" id="9765625at2"/>
<dbReference type="Proteomes" id="UP000001572">
    <property type="component" value="Chromosome"/>
</dbReference>
<dbReference type="GO" id="GO:0016829">
    <property type="term" value="F:lyase activity"/>
    <property type="evidence" value="ECO:0007669"/>
    <property type="project" value="UniProtKB-UniRule"/>
</dbReference>
<dbReference type="GO" id="GO:0016151">
    <property type="term" value="F:nickel cation binding"/>
    <property type="evidence" value="ECO:0007669"/>
    <property type="project" value="UniProtKB-UniRule"/>
</dbReference>
<dbReference type="GO" id="GO:0051604">
    <property type="term" value="P:protein maturation"/>
    <property type="evidence" value="ECO:0007669"/>
    <property type="project" value="UniProtKB-UniRule"/>
</dbReference>
<dbReference type="Gene3D" id="3.10.20.300">
    <property type="entry name" value="mk0293 like domain"/>
    <property type="match status" value="1"/>
</dbReference>
<dbReference type="Gene3D" id="3.30.70.1380">
    <property type="entry name" value="Transcriptional regulatory protein pf0864 domain like"/>
    <property type="match status" value="1"/>
</dbReference>
<dbReference type="HAMAP" id="MF_01074">
    <property type="entry name" value="LarC"/>
    <property type="match status" value="1"/>
</dbReference>
<dbReference type="InterPro" id="IPR002822">
    <property type="entry name" value="Ni_insertion"/>
</dbReference>
<dbReference type="NCBIfam" id="TIGR00299">
    <property type="entry name" value="nickel pincer cofactor biosynthesis protein LarC"/>
    <property type="match status" value="1"/>
</dbReference>
<dbReference type="PANTHER" id="PTHR36566">
    <property type="entry name" value="NICKEL INSERTION PROTEIN-RELATED"/>
    <property type="match status" value="1"/>
</dbReference>
<dbReference type="PANTHER" id="PTHR36566:SF1">
    <property type="entry name" value="PYRIDINIUM-3,5-BISTHIOCARBOXYLIC ACID MONONUCLEOTIDE NICKEL INSERTION PROTEIN"/>
    <property type="match status" value="1"/>
</dbReference>
<dbReference type="Pfam" id="PF01969">
    <property type="entry name" value="Ni_insertion"/>
    <property type="match status" value="1"/>
</dbReference>
<comment type="function">
    <text evidence="1">Involved in the biosynthesis of a nickel-pincer cofactor ((SCS)Ni(II) pincer complex). Binds Ni(2+), and functions in nickel delivery to pyridinium-3,5-bisthiocarboxylic acid mononucleotide (P2TMN), to form the mature cofactor. Is thus probably required for the activation of nickel-pincer cofactor-dependent enzymes.</text>
</comment>
<comment type="catalytic activity">
    <reaction evidence="1">
        <text>Ni(II)-pyridinium-3,5-bisthiocarboxylate mononucleotide = pyridinium-3,5-bisthiocarboxylate mononucleotide + Ni(2+)</text>
        <dbReference type="Rhea" id="RHEA:54784"/>
        <dbReference type="ChEBI" id="CHEBI:49786"/>
        <dbReference type="ChEBI" id="CHEBI:137372"/>
        <dbReference type="ChEBI" id="CHEBI:137373"/>
        <dbReference type="EC" id="4.99.1.12"/>
    </reaction>
</comment>
<comment type="similarity">
    <text evidence="1">Belongs to the LarC family.</text>
</comment>